<comment type="function">
    <text evidence="1">Involved in coproporphyrin-dependent heme b biosynthesis. Catalyzes the insertion of ferrous iron into coproporphyrin III to form Fe-coproporphyrin III.</text>
</comment>
<comment type="catalytic activity">
    <reaction evidence="1">
        <text>Fe-coproporphyrin III + 2 H(+) = coproporphyrin III + Fe(2+)</text>
        <dbReference type="Rhea" id="RHEA:49572"/>
        <dbReference type="ChEBI" id="CHEBI:15378"/>
        <dbReference type="ChEBI" id="CHEBI:29033"/>
        <dbReference type="ChEBI" id="CHEBI:68438"/>
        <dbReference type="ChEBI" id="CHEBI:131725"/>
        <dbReference type="EC" id="4.99.1.9"/>
    </reaction>
    <physiologicalReaction direction="right-to-left" evidence="1">
        <dbReference type="Rhea" id="RHEA:49574"/>
    </physiologicalReaction>
</comment>
<comment type="pathway">
    <text evidence="1">Porphyrin-containing compound metabolism; protoheme biosynthesis.</text>
</comment>
<comment type="subcellular location">
    <subcellularLocation>
        <location evidence="1">Cytoplasm</location>
    </subcellularLocation>
</comment>
<comment type="similarity">
    <text evidence="1">Belongs to the ferrochelatase family.</text>
</comment>
<accession>Q02Y14</accession>
<feature type="chain" id="PRO_1000019313" description="Coproporphyrin III ferrochelatase">
    <location>
        <begin position="1"/>
        <end position="318"/>
    </location>
</feature>
<feature type="binding site" evidence="1">
    <location>
        <position position="186"/>
    </location>
    <ligand>
        <name>Fe(2+)</name>
        <dbReference type="ChEBI" id="CHEBI:29033"/>
    </ligand>
</feature>
<feature type="binding site" evidence="1">
    <location>
        <position position="268"/>
    </location>
    <ligand>
        <name>Fe(2+)</name>
        <dbReference type="ChEBI" id="CHEBI:29033"/>
    </ligand>
</feature>
<organism>
    <name type="scientific">Lactococcus lactis subsp. cremoris (strain SK11)</name>
    <dbReference type="NCBI Taxonomy" id="272622"/>
    <lineage>
        <taxon>Bacteria</taxon>
        <taxon>Bacillati</taxon>
        <taxon>Bacillota</taxon>
        <taxon>Bacilli</taxon>
        <taxon>Lactobacillales</taxon>
        <taxon>Streptococcaceae</taxon>
        <taxon>Lactococcus</taxon>
        <taxon>Lactococcus cremoris subsp. cremoris</taxon>
    </lineage>
</organism>
<dbReference type="EC" id="4.99.1.9" evidence="1"/>
<dbReference type="EMBL" id="CP000425">
    <property type="protein sequence ID" value="ABJ73158.1"/>
    <property type="molecule type" value="Genomic_DNA"/>
</dbReference>
<dbReference type="SMR" id="Q02Y14"/>
<dbReference type="KEGG" id="llc:LACR_1661"/>
<dbReference type="HOGENOM" id="CLU_018884_0_0_9"/>
<dbReference type="UniPathway" id="UPA00252"/>
<dbReference type="Proteomes" id="UP000000240">
    <property type="component" value="Chromosome"/>
</dbReference>
<dbReference type="GO" id="GO:0005737">
    <property type="term" value="C:cytoplasm"/>
    <property type="evidence" value="ECO:0007669"/>
    <property type="project" value="UniProtKB-SubCell"/>
</dbReference>
<dbReference type="GO" id="GO:0004325">
    <property type="term" value="F:ferrochelatase activity"/>
    <property type="evidence" value="ECO:0007669"/>
    <property type="project" value="UniProtKB-UniRule"/>
</dbReference>
<dbReference type="GO" id="GO:0046872">
    <property type="term" value="F:metal ion binding"/>
    <property type="evidence" value="ECO:0007669"/>
    <property type="project" value="UniProtKB-KW"/>
</dbReference>
<dbReference type="GO" id="GO:0006783">
    <property type="term" value="P:heme biosynthetic process"/>
    <property type="evidence" value="ECO:0007669"/>
    <property type="project" value="UniProtKB-UniRule"/>
</dbReference>
<dbReference type="CDD" id="cd00419">
    <property type="entry name" value="Ferrochelatase_C"/>
    <property type="match status" value="1"/>
</dbReference>
<dbReference type="CDD" id="cd03411">
    <property type="entry name" value="Ferrochelatase_N"/>
    <property type="match status" value="1"/>
</dbReference>
<dbReference type="FunFam" id="3.40.50.1400:FF:000002">
    <property type="entry name" value="Ferrochelatase"/>
    <property type="match status" value="1"/>
</dbReference>
<dbReference type="Gene3D" id="3.40.50.1400">
    <property type="match status" value="2"/>
</dbReference>
<dbReference type="HAMAP" id="MF_00323">
    <property type="entry name" value="Ferrochelatase"/>
    <property type="match status" value="1"/>
</dbReference>
<dbReference type="InterPro" id="IPR001015">
    <property type="entry name" value="Ferrochelatase"/>
</dbReference>
<dbReference type="InterPro" id="IPR033644">
    <property type="entry name" value="Ferrochelatase_C"/>
</dbReference>
<dbReference type="InterPro" id="IPR033659">
    <property type="entry name" value="Ferrochelatase_N"/>
</dbReference>
<dbReference type="NCBIfam" id="TIGR00109">
    <property type="entry name" value="hemH"/>
    <property type="match status" value="1"/>
</dbReference>
<dbReference type="PANTHER" id="PTHR11108">
    <property type="entry name" value="FERROCHELATASE"/>
    <property type="match status" value="1"/>
</dbReference>
<dbReference type="PANTHER" id="PTHR11108:SF1">
    <property type="entry name" value="FERROCHELATASE, MITOCHONDRIAL"/>
    <property type="match status" value="1"/>
</dbReference>
<dbReference type="Pfam" id="PF00762">
    <property type="entry name" value="Ferrochelatase"/>
    <property type="match status" value="1"/>
</dbReference>
<dbReference type="SUPFAM" id="SSF53800">
    <property type="entry name" value="Chelatase"/>
    <property type="match status" value="1"/>
</dbReference>
<reference key="1">
    <citation type="journal article" date="2006" name="Proc. Natl. Acad. Sci. U.S.A.">
        <title>Comparative genomics of the lactic acid bacteria.</title>
        <authorList>
            <person name="Makarova K.S."/>
            <person name="Slesarev A."/>
            <person name="Wolf Y.I."/>
            <person name="Sorokin A."/>
            <person name="Mirkin B."/>
            <person name="Koonin E.V."/>
            <person name="Pavlov A."/>
            <person name="Pavlova N."/>
            <person name="Karamychev V."/>
            <person name="Polouchine N."/>
            <person name="Shakhova V."/>
            <person name="Grigoriev I."/>
            <person name="Lou Y."/>
            <person name="Rohksar D."/>
            <person name="Lucas S."/>
            <person name="Huang K."/>
            <person name="Goodstein D.M."/>
            <person name="Hawkins T."/>
            <person name="Plengvidhya V."/>
            <person name="Welker D."/>
            <person name="Hughes J."/>
            <person name="Goh Y."/>
            <person name="Benson A."/>
            <person name="Baldwin K."/>
            <person name="Lee J.-H."/>
            <person name="Diaz-Muniz I."/>
            <person name="Dosti B."/>
            <person name="Smeianov V."/>
            <person name="Wechter W."/>
            <person name="Barabote R."/>
            <person name="Lorca G."/>
            <person name="Altermann E."/>
            <person name="Barrangou R."/>
            <person name="Ganesan B."/>
            <person name="Xie Y."/>
            <person name="Rawsthorne H."/>
            <person name="Tamir D."/>
            <person name="Parker C."/>
            <person name="Breidt F."/>
            <person name="Broadbent J.R."/>
            <person name="Hutkins R."/>
            <person name="O'Sullivan D."/>
            <person name="Steele J."/>
            <person name="Unlu G."/>
            <person name="Saier M.H. Jr."/>
            <person name="Klaenhammer T."/>
            <person name="Richardson P."/>
            <person name="Kozyavkin S."/>
            <person name="Weimer B.C."/>
            <person name="Mills D.A."/>
        </authorList>
    </citation>
    <scope>NUCLEOTIDE SEQUENCE [LARGE SCALE GENOMIC DNA]</scope>
    <source>
        <strain>SK11</strain>
    </source>
</reference>
<evidence type="ECO:0000255" key="1">
    <source>
        <dbReference type="HAMAP-Rule" id="MF_00323"/>
    </source>
</evidence>
<protein>
    <recommendedName>
        <fullName evidence="1">Coproporphyrin III ferrochelatase</fullName>
        <ecNumber evidence="1">4.99.1.9</ecNumber>
    </recommendedName>
</protein>
<keyword id="KW-0963">Cytoplasm</keyword>
<keyword id="KW-0350">Heme biosynthesis</keyword>
<keyword id="KW-0408">Iron</keyword>
<keyword id="KW-0456">Lyase</keyword>
<keyword id="KW-0479">Metal-binding</keyword>
<keyword id="KW-0627">Porphyrin biosynthesis</keyword>
<sequence length="318" mass="36986">MDKKKGILLVALGTPRSCETEDVREYLKEFLGDPLVIQKPRWLWLPILNGIILKVRPQKSAEMYKQIWTDEGSPLMSYTIAQTEQLQGLREDFDVRFAMTYGEPRIDKVIREMKESGVEDITVLPLYPQYSLTTVEPIIQQVKKIDDKINVIRDFHQIESYTDLLAESIREKWQANHYDKLILSYHGIPLSYVTKKKDAYEAQCIETTRLVVEKLGLKEEEYEHTYQSKFGPEKWLEPATIDRIAELPKEDTKKVLICSPAFVADCLETLFELEIENKEVFVENGGETFDFVHPFNDSLEFTKVLSEVIEKNKVEVEV</sequence>
<name>CPFC_LACLS</name>
<proteinExistence type="inferred from homology"/>
<gene>
    <name evidence="1" type="primary">cpfC</name>
    <name type="ordered locus">LACR_1661</name>
</gene>